<keyword id="KW-0028">Amino-acid biosynthesis</keyword>
<keyword id="KW-0963">Cytoplasm</keyword>
<keyword id="KW-0220">Diaminopimelate biosynthesis</keyword>
<keyword id="KW-0457">Lysine biosynthesis</keyword>
<keyword id="KW-0520">NAD</keyword>
<keyword id="KW-0521">NADP</keyword>
<keyword id="KW-0560">Oxidoreductase</keyword>
<sequence length="273" mass="28660">MSAAPRIGILGAGGRMGRTLIQAVQQAGYQLAAAVERPESSLVGTDAGELAGIGSVGVKVSGSLADVLKDCDVIIDFTAPAATAQHLKLCREAGVAMVIGTTGMSDEQKAELDEAATHTPVVYAANYSVGVNVSIKLLELAAKVFGDTVDIEVIEAHHRHKVDAPSGTALMMGEAIADTLGRNLKEVAVYGREGHTGPRDRQTIGFETIRGGDIVGEHTVMFIGEGERVEVTHKATNRMNFAAGAVRAAAWVVGREARKYDMKDVLGLNDVQV</sequence>
<evidence type="ECO:0000255" key="1">
    <source>
        <dbReference type="HAMAP-Rule" id="MF_00102"/>
    </source>
</evidence>
<evidence type="ECO:0000305" key="2"/>
<reference key="1">
    <citation type="journal article" date="2007" name="Genes Dev.">
        <title>New insights into Acinetobacter baumannii pathogenesis revealed by high-density pyrosequencing and transposon mutagenesis.</title>
        <authorList>
            <person name="Smith M.G."/>
            <person name="Gianoulis T.A."/>
            <person name="Pukatzki S."/>
            <person name="Mekalanos J.J."/>
            <person name="Ornston L.N."/>
            <person name="Gerstein M."/>
            <person name="Snyder M."/>
        </authorList>
    </citation>
    <scope>NUCLEOTIDE SEQUENCE [LARGE SCALE GENOMIC DNA]</scope>
    <source>
        <strain>ATCC 17978 / DSM 105126 / CIP 53.77 / LMG 1025 / NCDC KC755 / 5377</strain>
    </source>
</reference>
<proteinExistence type="inferred from homology"/>
<protein>
    <recommendedName>
        <fullName evidence="1">4-hydroxy-tetrahydrodipicolinate reductase</fullName>
        <shortName evidence="1">HTPA reductase</shortName>
        <ecNumber evidence="1">1.17.1.8</ecNumber>
    </recommendedName>
</protein>
<organism>
    <name type="scientific">Acinetobacter baumannii (strain ATCC 17978 / DSM 105126 / CIP 53.77 / LMG 1025 / NCDC KC755 / 5377)</name>
    <dbReference type="NCBI Taxonomy" id="400667"/>
    <lineage>
        <taxon>Bacteria</taxon>
        <taxon>Pseudomonadati</taxon>
        <taxon>Pseudomonadota</taxon>
        <taxon>Gammaproteobacteria</taxon>
        <taxon>Moraxellales</taxon>
        <taxon>Moraxellaceae</taxon>
        <taxon>Acinetobacter</taxon>
        <taxon>Acinetobacter calcoaceticus/baumannii complex</taxon>
    </lineage>
</organism>
<gene>
    <name evidence="1" type="primary">dapB</name>
    <name type="ordered locus">A1S_3442</name>
</gene>
<feature type="chain" id="PRO_1000093936" description="4-hydroxy-tetrahydrodipicolinate reductase">
    <location>
        <begin position="1"/>
        <end position="273"/>
    </location>
</feature>
<feature type="active site" description="Proton donor/acceptor" evidence="1">
    <location>
        <position position="157"/>
    </location>
</feature>
<feature type="active site" description="Proton donor" evidence="1">
    <location>
        <position position="161"/>
    </location>
</feature>
<feature type="binding site" evidence="1">
    <location>
        <begin position="11"/>
        <end position="16"/>
    </location>
    <ligand>
        <name>NAD(+)</name>
        <dbReference type="ChEBI" id="CHEBI:57540"/>
    </ligand>
</feature>
<feature type="binding site" evidence="1">
    <location>
        <position position="36"/>
    </location>
    <ligand>
        <name>NAD(+)</name>
        <dbReference type="ChEBI" id="CHEBI:57540"/>
    </ligand>
</feature>
<feature type="binding site" evidence="1">
    <location>
        <position position="37"/>
    </location>
    <ligand>
        <name>NADP(+)</name>
        <dbReference type="ChEBI" id="CHEBI:58349"/>
    </ligand>
</feature>
<feature type="binding site" evidence="1">
    <location>
        <begin position="100"/>
        <end position="102"/>
    </location>
    <ligand>
        <name>NAD(+)</name>
        <dbReference type="ChEBI" id="CHEBI:57540"/>
    </ligand>
</feature>
<feature type="binding site" evidence="1">
    <location>
        <begin position="124"/>
        <end position="127"/>
    </location>
    <ligand>
        <name>NAD(+)</name>
        <dbReference type="ChEBI" id="CHEBI:57540"/>
    </ligand>
</feature>
<feature type="binding site" evidence="1">
    <location>
        <position position="158"/>
    </location>
    <ligand>
        <name>(S)-2,3,4,5-tetrahydrodipicolinate</name>
        <dbReference type="ChEBI" id="CHEBI:16845"/>
    </ligand>
</feature>
<feature type="binding site" evidence="1">
    <location>
        <begin position="167"/>
        <end position="168"/>
    </location>
    <ligand>
        <name>(S)-2,3,4,5-tetrahydrodipicolinate</name>
        <dbReference type="ChEBI" id="CHEBI:16845"/>
    </ligand>
</feature>
<comment type="function">
    <text evidence="1">Catalyzes the conversion of 4-hydroxy-tetrahydrodipicolinate (HTPA) to tetrahydrodipicolinate.</text>
</comment>
<comment type="catalytic activity">
    <reaction evidence="1">
        <text>(S)-2,3,4,5-tetrahydrodipicolinate + NAD(+) + H2O = (2S,4S)-4-hydroxy-2,3,4,5-tetrahydrodipicolinate + NADH + H(+)</text>
        <dbReference type="Rhea" id="RHEA:35323"/>
        <dbReference type="ChEBI" id="CHEBI:15377"/>
        <dbReference type="ChEBI" id="CHEBI:15378"/>
        <dbReference type="ChEBI" id="CHEBI:16845"/>
        <dbReference type="ChEBI" id="CHEBI:57540"/>
        <dbReference type="ChEBI" id="CHEBI:57945"/>
        <dbReference type="ChEBI" id="CHEBI:67139"/>
        <dbReference type="EC" id="1.17.1.8"/>
    </reaction>
</comment>
<comment type="catalytic activity">
    <reaction evidence="1">
        <text>(S)-2,3,4,5-tetrahydrodipicolinate + NADP(+) + H2O = (2S,4S)-4-hydroxy-2,3,4,5-tetrahydrodipicolinate + NADPH + H(+)</text>
        <dbReference type="Rhea" id="RHEA:35331"/>
        <dbReference type="ChEBI" id="CHEBI:15377"/>
        <dbReference type="ChEBI" id="CHEBI:15378"/>
        <dbReference type="ChEBI" id="CHEBI:16845"/>
        <dbReference type="ChEBI" id="CHEBI:57783"/>
        <dbReference type="ChEBI" id="CHEBI:58349"/>
        <dbReference type="ChEBI" id="CHEBI:67139"/>
        <dbReference type="EC" id="1.17.1.8"/>
    </reaction>
</comment>
<comment type="pathway">
    <text evidence="1">Amino-acid biosynthesis; L-lysine biosynthesis via DAP pathway; (S)-tetrahydrodipicolinate from L-aspartate: step 4/4.</text>
</comment>
<comment type="subcellular location">
    <subcellularLocation>
        <location evidence="1">Cytoplasm</location>
    </subcellularLocation>
</comment>
<comment type="similarity">
    <text evidence="1">Belongs to the DapB family.</text>
</comment>
<comment type="caution">
    <text evidence="2">Was originally thought to be a dihydrodipicolinate reductase (DHDPR), catalyzing the conversion of dihydrodipicolinate to tetrahydrodipicolinate. However, it was shown in E.coli that the substrate of the enzymatic reaction is not dihydrodipicolinate (DHDP) but in fact (2S,4S)-4-hydroxy-2,3,4,5-tetrahydrodipicolinic acid (HTPA), the product released by the DapA-catalyzed reaction.</text>
</comment>
<name>DAPB_ACIBT</name>
<dbReference type="EC" id="1.17.1.8" evidence="1"/>
<dbReference type="EMBL" id="CP000521">
    <property type="protein sequence ID" value="ABO13831.2"/>
    <property type="molecule type" value="Genomic_DNA"/>
</dbReference>
<dbReference type="RefSeq" id="WP_001271389.1">
    <property type="nucleotide sequence ID" value="NZ_CP053098.1"/>
</dbReference>
<dbReference type="SMR" id="A3MA87"/>
<dbReference type="KEGG" id="acb:A1S_3442"/>
<dbReference type="HOGENOM" id="CLU_047479_2_1_6"/>
<dbReference type="UniPathway" id="UPA00034">
    <property type="reaction ID" value="UER00018"/>
</dbReference>
<dbReference type="GO" id="GO:0005829">
    <property type="term" value="C:cytosol"/>
    <property type="evidence" value="ECO:0007669"/>
    <property type="project" value="TreeGrafter"/>
</dbReference>
<dbReference type="GO" id="GO:0008839">
    <property type="term" value="F:4-hydroxy-tetrahydrodipicolinate reductase"/>
    <property type="evidence" value="ECO:0007669"/>
    <property type="project" value="UniProtKB-EC"/>
</dbReference>
<dbReference type="GO" id="GO:0051287">
    <property type="term" value="F:NAD binding"/>
    <property type="evidence" value="ECO:0007669"/>
    <property type="project" value="UniProtKB-UniRule"/>
</dbReference>
<dbReference type="GO" id="GO:0050661">
    <property type="term" value="F:NADP binding"/>
    <property type="evidence" value="ECO:0007669"/>
    <property type="project" value="UniProtKB-UniRule"/>
</dbReference>
<dbReference type="GO" id="GO:0016726">
    <property type="term" value="F:oxidoreductase activity, acting on CH or CH2 groups, NAD or NADP as acceptor"/>
    <property type="evidence" value="ECO:0007669"/>
    <property type="project" value="UniProtKB-UniRule"/>
</dbReference>
<dbReference type="GO" id="GO:0019877">
    <property type="term" value="P:diaminopimelate biosynthetic process"/>
    <property type="evidence" value="ECO:0007669"/>
    <property type="project" value="UniProtKB-UniRule"/>
</dbReference>
<dbReference type="GO" id="GO:0009089">
    <property type="term" value="P:lysine biosynthetic process via diaminopimelate"/>
    <property type="evidence" value="ECO:0007669"/>
    <property type="project" value="UniProtKB-UniRule"/>
</dbReference>
<dbReference type="CDD" id="cd02274">
    <property type="entry name" value="DHDPR_N"/>
    <property type="match status" value="1"/>
</dbReference>
<dbReference type="FunFam" id="3.30.360.10:FF:000004">
    <property type="entry name" value="4-hydroxy-tetrahydrodipicolinate reductase"/>
    <property type="match status" value="1"/>
</dbReference>
<dbReference type="FunFam" id="3.40.50.720:FF:000048">
    <property type="entry name" value="4-hydroxy-tetrahydrodipicolinate reductase"/>
    <property type="match status" value="1"/>
</dbReference>
<dbReference type="Gene3D" id="3.30.360.10">
    <property type="entry name" value="Dihydrodipicolinate Reductase, domain 2"/>
    <property type="match status" value="1"/>
</dbReference>
<dbReference type="Gene3D" id="3.40.50.720">
    <property type="entry name" value="NAD(P)-binding Rossmann-like Domain"/>
    <property type="match status" value="1"/>
</dbReference>
<dbReference type="HAMAP" id="MF_00102">
    <property type="entry name" value="DapB"/>
    <property type="match status" value="1"/>
</dbReference>
<dbReference type="InterPro" id="IPR022663">
    <property type="entry name" value="DapB_C"/>
</dbReference>
<dbReference type="InterPro" id="IPR000846">
    <property type="entry name" value="DapB_N"/>
</dbReference>
<dbReference type="InterPro" id="IPR022664">
    <property type="entry name" value="DapB_N_CS"/>
</dbReference>
<dbReference type="InterPro" id="IPR023940">
    <property type="entry name" value="DHDPR_bac"/>
</dbReference>
<dbReference type="InterPro" id="IPR036291">
    <property type="entry name" value="NAD(P)-bd_dom_sf"/>
</dbReference>
<dbReference type="NCBIfam" id="TIGR00036">
    <property type="entry name" value="dapB"/>
    <property type="match status" value="1"/>
</dbReference>
<dbReference type="PANTHER" id="PTHR20836:SF0">
    <property type="entry name" value="4-HYDROXY-TETRAHYDRODIPICOLINATE REDUCTASE 1, CHLOROPLASTIC-RELATED"/>
    <property type="match status" value="1"/>
</dbReference>
<dbReference type="PANTHER" id="PTHR20836">
    <property type="entry name" value="DIHYDRODIPICOLINATE REDUCTASE"/>
    <property type="match status" value="1"/>
</dbReference>
<dbReference type="Pfam" id="PF05173">
    <property type="entry name" value="DapB_C"/>
    <property type="match status" value="1"/>
</dbReference>
<dbReference type="Pfam" id="PF01113">
    <property type="entry name" value="DapB_N"/>
    <property type="match status" value="1"/>
</dbReference>
<dbReference type="PIRSF" id="PIRSF000161">
    <property type="entry name" value="DHPR"/>
    <property type="match status" value="1"/>
</dbReference>
<dbReference type="SUPFAM" id="SSF55347">
    <property type="entry name" value="Glyceraldehyde-3-phosphate dehydrogenase-like, C-terminal domain"/>
    <property type="match status" value="1"/>
</dbReference>
<dbReference type="SUPFAM" id="SSF51735">
    <property type="entry name" value="NAD(P)-binding Rossmann-fold domains"/>
    <property type="match status" value="1"/>
</dbReference>
<dbReference type="PROSITE" id="PS01298">
    <property type="entry name" value="DAPB"/>
    <property type="match status" value="1"/>
</dbReference>
<accession>A3MA87</accession>